<keyword id="KW-0029">Amino-acid transport</keyword>
<keyword id="KW-1003">Cell membrane</keyword>
<keyword id="KW-0966">Cell projection</keyword>
<keyword id="KW-1015">Disulfide bond</keyword>
<keyword id="KW-0325">Glycoprotein</keyword>
<keyword id="KW-0406">Ion transport</keyword>
<keyword id="KW-0472">Membrane</keyword>
<keyword id="KW-0597">Phosphoprotein</keyword>
<keyword id="KW-1185">Reference proteome</keyword>
<keyword id="KW-0915">Sodium</keyword>
<keyword id="KW-0739">Sodium transport</keyword>
<keyword id="KW-0769">Symport</keyword>
<keyword id="KW-0812">Transmembrane</keyword>
<keyword id="KW-1133">Transmembrane helix</keyword>
<keyword id="KW-0813">Transport</keyword>
<name>S38A4_RAT</name>
<reference key="1">
    <citation type="journal article" date="2000" name="Biochim. Biophys. Acta">
        <title>Structure and function of ATA3, a new subtype of amino acid transport system A, primarily expressed in the liver and skeletal muscle.</title>
        <authorList>
            <person name="Sugawara M."/>
            <person name="Nakanishi T."/>
            <person name="Fei Y.-J."/>
            <person name="Martindale R.G."/>
            <person name="Ganapathy M.E."/>
            <person name="Leibach F.H."/>
            <person name="Ganapathy V."/>
        </authorList>
    </citation>
    <scope>NUCLEOTIDE SEQUENCE [MRNA]</scope>
    <scope>FUNCTION</scope>
    <scope>TRANSPORTER ACTIVITY</scope>
    <scope>TISSUE SPECIFICITY</scope>
    <source>
        <strain>Sprague-Dawley</strain>
        <tissue>Skeletal muscle</tissue>
    </source>
</reference>
<reference key="2">
    <citation type="journal article" date="2004" name="Genome Res.">
        <title>The status, quality, and expansion of the NIH full-length cDNA project: the Mammalian Gene Collection (MGC).</title>
        <authorList>
            <consortium name="The MGC Project Team"/>
        </authorList>
    </citation>
    <scope>NUCLEOTIDE SEQUENCE [LARGE SCALE MRNA]</scope>
    <source>
        <tissue>Placenta</tissue>
    </source>
</reference>
<reference key="3">
    <citation type="journal article" date="2012" name="Nat. Commun.">
        <title>Quantitative maps of protein phosphorylation sites across 14 different rat organs and tissues.</title>
        <authorList>
            <person name="Lundby A."/>
            <person name="Secher A."/>
            <person name="Lage K."/>
            <person name="Nordsborg N.B."/>
            <person name="Dmytriyev A."/>
            <person name="Lundby C."/>
            <person name="Olsen J.V."/>
        </authorList>
    </citation>
    <scope>PHOSPHORYLATION [LARGE SCALE ANALYSIS] AT SER-49</scope>
    <scope>IDENTIFICATION BY MASS SPECTROMETRY [LARGE SCALE ANALYSIS]</scope>
</reference>
<gene>
    <name evidence="8" type="primary">Slc38a4</name>
    <name evidence="5" type="synonym">Ata3</name>
    <name type="synonym">Snat4</name>
</gene>
<sequence>MDPIELRSVNIEPYEDSCSVDSIQSCYTGMGNSEKGAMDSQFANEDAESQKFLTNGFLGKKTLTDYADEHHPGTTSFGMSSFNLSNAIMGSGILGLSYAMANTGIVLFVIMLLTVAILSLYSVHLLLKTAKEGGSLIYEKLGEKAFGWPGKIGAFISITMQNIGAMSSYLFIIKYELPEVIRVFMGLEENTGEWYLNGNYLVLFVSVGIILPLSLLKNLGYLGYTSGFSLTCMVFFVSVVIYKKFQIPCPLPVLDHNNGNLTFNNTLPMHVIMLPNNSESTGMNFMVDYTHRDPEGLDEKPAAGPLHGSGVEYEAHSGDKCQPKYFVFNSRTAYAIPILAFAFVCHPEVLPIYSELKDRSRRKMQTVSNISITGMLVMYLLAALFGYLSFYGEVEDELLHAYSKVYTFDTALLMVRLAVLVAVTLTVPIVLFPIRTSVITLLFPRRPFSWVKHFGIAAIIIALNNVLVILVPTIKYIFGFIGASSATMLIFILPAAFYLKLVKKEPLRSPQKIGALVFLVTGIIFMMGSMALIIIDWIYNPPNPDHH</sequence>
<comment type="function">
    <text evidence="4">Symporter that cotransports neutral amino acids and sodium ions from the extraccellular to the intracellular side of the cell membrane (PubMed:11118514). The transport is electrogenic, pH dependent and partially tolerates substitution of Na(+) by Li(+) (PubMed:11118514). Preferentially transports smaller amino acids, such as glycine, L-alanine, L-serine, L-asparagine and L-threonine, followed by L-cysteine, L-histidine, L-proline and L-glutamine and L-methionine (PubMed:11118514).</text>
</comment>
<comment type="catalytic activity">
    <reaction evidence="4">
        <text>L-alanine(in) + Na(+)(in) = L-alanine(out) + Na(+)(out)</text>
        <dbReference type="Rhea" id="RHEA:29283"/>
        <dbReference type="ChEBI" id="CHEBI:29101"/>
        <dbReference type="ChEBI" id="CHEBI:57972"/>
    </reaction>
    <physiologicalReaction direction="right-to-left" evidence="2">
        <dbReference type="Rhea" id="RHEA:29285"/>
    </physiologicalReaction>
</comment>
<comment type="catalytic activity">
    <reaction evidence="4">
        <text>L-serine(in) + Na(+)(in) = L-serine(out) + Na(+)(out)</text>
        <dbReference type="Rhea" id="RHEA:29575"/>
        <dbReference type="ChEBI" id="CHEBI:29101"/>
        <dbReference type="ChEBI" id="CHEBI:33384"/>
    </reaction>
    <physiologicalReaction direction="right-to-left" evidence="2">
        <dbReference type="Rhea" id="RHEA:29577"/>
    </physiologicalReaction>
</comment>
<comment type="catalytic activity">
    <reaction evidence="4">
        <text>glycine(in) + Na(+)(in) = glycine(out) + Na(+)(out)</text>
        <dbReference type="Rhea" id="RHEA:68228"/>
        <dbReference type="ChEBI" id="CHEBI:29101"/>
        <dbReference type="ChEBI" id="CHEBI:57305"/>
    </reaction>
    <physiologicalReaction direction="right-to-left" evidence="2">
        <dbReference type="Rhea" id="RHEA:68230"/>
    </physiologicalReaction>
</comment>
<comment type="catalytic activity">
    <reaction evidence="4">
        <text>L-cysteine(in) + Na(+)(in) = L-cysteine(out) + Na(+)(out)</text>
        <dbReference type="Rhea" id="RHEA:68232"/>
        <dbReference type="ChEBI" id="CHEBI:29101"/>
        <dbReference type="ChEBI" id="CHEBI:35235"/>
    </reaction>
    <physiologicalReaction direction="right-to-left" evidence="7">
        <dbReference type="Rhea" id="RHEA:68234"/>
    </physiologicalReaction>
</comment>
<comment type="catalytic activity">
    <reaction evidence="4">
        <text>L-asparagine(in) + Na(+)(in) = L-asparagine(out) + Na(+)(out)</text>
        <dbReference type="Rhea" id="RHEA:71383"/>
        <dbReference type="ChEBI" id="CHEBI:29101"/>
        <dbReference type="ChEBI" id="CHEBI:58048"/>
    </reaction>
    <physiologicalReaction direction="right-to-left" evidence="2">
        <dbReference type="Rhea" id="RHEA:71385"/>
    </physiologicalReaction>
</comment>
<comment type="catalytic activity">
    <reaction evidence="4">
        <text>L-threonine(in) + Na(+)(in) = L-threonine(out) + Na(+)(out)</text>
        <dbReference type="Rhea" id="RHEA:69999"/>
        <dbReference type="ChEBI" id="CHEBI:29101"/>
        <dbReference type="ChEBI" id="CHEBI:57926"/>
    </reaction>
    <physiologicalReaction direction="right-to-left" evidence="2">
        <dbReference type="Rhea" id="RHEA:70001"/>
    </physiologicalReaction>
</comment>
<comment type="catalytic activity">
    <reaction evidence="4">
        <text>L-proline(in) + Na(+)(in) = L-proline(out) + Na(+)(out)</text>
        <dbReference type="Rhea" id="RHEA:28967"/>
        <dbReference type="ChEBI" id="CHEBI:29101"/>
        <dbReference type="ChEBI" id="CHEBI:60039"/>
    </reaction>
    <physiologicalReaction direction="right-to-left" evidence="7">
        <dbReference type="Rhea" id="RHEA:28969"/>
    </physiologicalReaction>
</comment>
<comment type="catalytic activity">
    <reaction evidence="4">
        <text>L-methionine(in) + Na(+)(in) = L-methionine(out) + Na(+)(out)</text>
        <dbReference type="Rhea" id="RHEA:68240"/>
        <dbReference type="ChEBI" id="CHEBI:29101"/>
        <dbReference type="ChEBI" id="CHEBI:57844"/>
    </reaction>
    <physiologicalReaction direction="right-to-left" evidence="7">
        <dbReference type="Rhea" id="RHEA:68242"/>
    </physiologicalReaction>
</comment>
<comment type="catalytic activity">
    <reaction evidence="4">
        <text>L-glutamine(in) + Na(+)(in) = L-glutamine(out) + Na(+)(out)</text>
        <dbReference type="Rhea" id="RHEA:68236"/>
        <dbReference type="ChEBI" id="CHEBI:29101"/>
        <dbReference type="ChEBI" id="CHEBI:58359"/>
    </reaction>
    <physiologicalReaction direction="right-to-left" evidence="2">
        <dbReference type="Rhea" id="RHEA:68238"/>
    </physiologicalReaction>
</comment>
<comment type="catalytic activity">
    <reaction evidence="4">
        <text>L-histidine(in) + Na(+)(in) = L-histidine(out) + Na(+)(out)</text>
        <dbReference type="Rhea" id="RHEA:71583"/>
        <dbReference type="ChEBI" id="CHEBI:29101"/>
        <dbReference type="ChEBI" id="CHEBI:57595"/>
    </reaction>
    <physiologicalReaction direction="right-to-left" evidence="2">
        <dbReference type="Rhea" id="RHEA:71585"/>
    </physiologicalReaction>
</comment>
<comment type="subcellular location">
    <subcellularLocation>
        <location evidence="2">Cell membrane</location>
        <topology evidence="2">Multi-pass membrane protein</topology>
    </subcellularLocation>
    <subcellularLocation>
        <location evidence="2">Cell projection</location>
        <location evidence="2">Microvillus membrane</location>
        <topology evidence="2">Multi-pass membrane protein</topology>
    </subcellularLocation>
    <text evidence="2">Microvillus membrane localization in placenta.</text>
</comment>
<comment type="tissue specificity">
    <text evidence="4">Expressed predominantly in liver, and at lower level in skeletal muscle.</text>
</comment>
<comment type="PTM">
    <text evidence="1">The disulfide bond plays an important role in substrate transport, but has no effect on trafficking to the cell surface.</text>
</comment>
<comment type="similarity">
    <text evidence="6">Belongs to the amino acid/polyamine transporter 2 family.</text>
</comment>
<comment type="caution">
    <text evidence="2">There is a disagreement about sodium-independent transport of cationic amino acids, such as L-arginine and L-lysine (By similarity). While Hatanaka et al. shown that SLC38A4 may mediate sodium-independent transport of cationic amino acids, such as L-arginine and L-lysine (By similarity). Recent studies by Fairweather et al., using quantitative LC-MS analysis, shown any transport activity of cationic amino acids, such as L-arginine and L-lysine (By similarity).</text>
</comment>
<dbReference type="EMBL" id="AF295535">
    <property type="protein sequence ID" value="AAG45335.1"/>
    <property type="molecule type" value="mRNA"/>
</dbReference>
<dbReference type="EMBL" id="BC097292">
    <property type="protein sequence ID" value="AAH97292.1"/>
    <property type="molecule type" value="mRNA"/>
</dbReference>
<dbReference type="RefSeq" id="NP_570104.1">
    <property type="nucleotide sequence ID" value="NM_130748.1"/>
</dbReference>
<dbReference type="RefSeq" id="XP_008763885.1">
    <property type="nucleotide sequence ID" value="XM_008765663.3"/>
</dbReference>
<dbReference type="RefSeq" id="XP_038934250.1">
    <property type="nucleotide sequence ID" value="XM_039078322.1"/>
</dbReference>
<dbReference type="SMR" id="Q9EQ25"/>
<dbReference type="FunCoup" id="Q9EQ25">
    <property type="interactions" value="44"/>
</dbReference>
<dbReference type="STRING" id="10116.ENSRNOP00000068616"/>
<dbReference type="TCDB" id="2.A.18.6.7">
    <property type="family name" value="the amino acid/auxin permease (aaap) family"/>
</dbReference>
<dbReference type="GlyCosmos" id="Q9EQ25">
    <property type="glycosylation" value="3 sites, No reported glycans"/>
</dbReference>
<dbReference type="GlyGen" id="Q9EQ25">
    <property type="glycosylation" value="3 sites"/>
</dbReference>
<dbReference type="iPTMnet" id="Q9EQ25"/>
<dbReference type="PhosphoSitePlus" id="Q9EQ25"/>
<dbReference type="jPOST" id="Q9EQ25"/>
<dbReference type="PaxDb" id="10116-ENSRNOP00000009187"/>
<dbReference type="Ensembl" id="ENSRNOT00000009187.6">
    <property type="protein sequence ID" value="ENSRNOP00000009187.2"/>
    <property type="gene ID" value="ENSRNOG00000006653.6"/>
</dbReference>
<dbReference type="GeneID" id="170573"/>
<dbReference type="KEGG" id="rno:170573"/>
<dbReference type="UCSC" id="RGD:621836">
    <property type="organism name" value="rat"/>
</dbReference>
<dbReference type="AGR" id="RGD:621836"/>
<dbReference type="CTD" id="55089"/>
<dbReference type="RGD" id="621836">
    <property type="gene designation" value="Slc38a4"/>
</dbReference>
<dbReference type="eggNOG" id="KOG1305">
    <property type="taxonomic scope" value="Eukaryota"/>
</dbReference>
<dbReference type="GeneTree" id="ENSGT00940000158917"/>
<dbReference type="InParanoid" id="Q9EQ25"/>
<dbReference type="OMA" id="QFANDDA"/>
<dbReference type="OrthoDB" id="655540at2759"/>
<dbReference type="PhylomeDB" id="Q9EQ25"/>
<dbReference type="TreeFam" id="TF328787"/>
<dbReference type="Reactome" id="R-RNO-352230">
    <property type="pathway name" value="Amino acid transport across the plasma membrane"/>
</dbReference>
<dbReference type="PRO" id="PR:Q9EQ25"/>
<dbReference type="Proteomes" id="UP000002494">
    <property type="component" value="Chromosome 7"/>
</dbReference>
<dbReference type="Bgee" id="ENSRNOG00000006653">
    <property type="expression patterns" value="Expressed in liver and 18 other cell types or tissues"/>
</dbReference>
<dbReference type="GO" id="GO:0031528">
    <property type="term" value="C:microvillus membrane"/>
    <property type="evidence" value="ECO:0000250"/>
    <property type="project" value="UniProtKB"/>
</dbReference>
<dbReference type="GO" id="GO:0005886">
    <property type="term" value="C:plasma membrane"/>
    <property type="evidence" value="ECO:0000318"/>
    <property type="project" value="GO_Central"/>
</dbReference>
<dbReference type="GO" id="GO:0022853">
    <property type="term" value="F:active monoatomic ion transmembrane transporter activity"/>
    <property type="evidence" value="ECO:0007669"/>
    <property type="project" value="UniProtKB-ARBA"/>
</dbReference>
<dbReference type="GO" id="GO:0015655">
    <property type="term" value="F:alanine:sodium symporter activity"/>
    <property type="evidence" value="ECO:0000250"/>
    <property type="project" value="UniProtKB"/>
</dbReference>
<dbReference type="GO" id="GO:0015171">
    <property type="term" value="F:amino acid transmembrane transporter activity"/>
    <property type="evidence" value="ECO:0000314"/>
    <property type="project" value="RGD"/>
</dbReference>
<dbReference type="GO" id="GO:0005283">
    <property type="term" value="F:amino acid:sodium symporter activity"/>
    <property type="evidence" value="ECO:0000266"/>
    <property type="project" value="RGD"/>
</dbReference>
<dbReference type="GO" id="GO:0015179">
    <property type="term" value="F:L-amino acid transmembrane transporter activity"/>
    <property type="evidence" value="ECO:0000318"/>
    <property type="project" value="GO_Central"/>
</dbReference>
<dbReference type="GO" id="GO:0061459">
    <property type="term" value="F:L-arginine transmembrane transporter activity"/>
    <property type="evidence" value="ECO:0000250"/>
    <property type="project" value="UniProtKB"/>
</dbReference>
<dbReference type="GO" id="GO:0005295">
    <property type="term" value="F:neutral L-amino acid:sodium symporter activity"/>
    <property type="evidence" value="ECO:0000314"/>
    <property type="project" value="UniProtKB"/>
</dbReference>
<dbReference type="GO" id="GO:0003333">
    <property type="term" value="P:amino acid transmembrane transport"/>
    <property type="evidence" value="ECO:0000318"/>
    <property type="project" value="GO_Central"/>
</dbReference>
<dbReference type="GO" id="GO:1904273">
    <property type="term" value="P:L-alanine import across plasma membrane"/>
    <property type="evidence" value="ECO:0000250"/>
    <property type="project" value="UniProtKB"/>
</dbReference>
<dbReference type="GO" id="GO:1904557">
    <property type="term" value="P:L-alanine transmembrane transport"/>
    <property type="evidence" value="ECO:0000250"/>
    <property type="project" value="UniProtKB"/>
</dbReference>
<dbReference type="GO" id="GO:1903826">
    <property type="term" value="P:L-arginine transmembrane transport"/>
    <property type="evidence" value="ECO:0000250"/>
    <property type="project" value="UniProtKB"/>
</dbReference>
<dbReference type="GO" id="GO:0015804">
    <property type="term" value="P:neutral amino acid transport"/>
    <property type="evidence" value="ECO:0000314"/>
    <property type="project" value="UniProtKB"/>
</dbReference>
<dbReference type="InterPro" id="IPR013057">
    <property type="entry name" value="AA_transpt_TM"/>
</dbReference>
<dbReference type="PANTHER" id="PTHR22950">
    <property type="entry name" value="AMINO ACID TRANSPORTER"/>
    <property type="match status" value="1"/>
</dbReference>
<dbReference type="PANTHER" id="PTHR22950:SF222">
    <property type="entry name" value="SODIUM-COUPLED NEUTRAL AMINO ACID TRANSPORTER 4"/>
    <property type="match status" value="1"/>
</dbReference>
<dbReference type="Pfam" id="PF01490">
    <property type="entry name" value="Aa_trans"/>
    <property type="match status" value="2"/>
</dbReference>
<feature type="chain" id="PRO_0000247863" description="Sodium-coupled neutral amino acid transporter 4">
    <location>
        <begin position="1"/>
        <end position="547"/>
    </location>
</feature>
<feature type="topological domain" description="Extracellular" evidence="2 3">
    <location>
        <begin position="1"/>
        <end position="104"/>
    </location>
</feature>
<feature type="transmembrane region" description="Helical" evidence="3">
    <location>
        <begin position="105"/>
        <end position="125"/>
    </location>
</feature>
<feature type="topological domain" description="Cytoplasmic" evidence="2 3">
    <location>
        <begin position="126"/>
        <end position="151"/>
    </location>
</feature>
<feature type="transmembrane region" description="Helical" evidence="3">
    <location>
        <begin position="152"/>
        <end position="172"/>
    </location>
</feature>
<feature type="topological domain" description="Extracellular" evidence="2 3">
    <location>
        <begin position="173"/>
        <end position="195"/>
    </location>
</feature>
<feature type="transmembrane region" description="Helical" evidence="3">
    <location>
        <begin position="196"/>
        <end position="216"/>
    </location>
</feature>
<feature type="topological domain" description="Cytoplasmic" evidence="2 3">
    <location>
        <begin position="217"/>
        <end position="220"/>
    </location>
</feature>
<feature type="transmembrane region" description="Helical" evidence="3">
    <location>
        <begin position="221"/>
        <end position="241"/>
    </location>
</feature>
<feature type="topological domain" description="Extracellular" evidence="2 3">
    <location>
        <begin position="242"/>
        <end position="332"/>
    </location>
</feature>
<feature type="transmembrane region" description="Helical" evidence="3">
    <location>
        <begin position="333"/>
        <end position="353"/>
    </location>
</feature>
<feature type="topological domain" description="Cytoplasmic" evidence="2 3">
    <location>
        <begin position="354"/>
        <end position="369"/>
    </location>
</feature>
<feature type="transmembrane region" description="Helical" evidence="3">
    <location>
        <begin position="370"/>
        <end position="390"/>
    </location>
</feature>
<feature type="topological domain" description="Extracellular" evidence="2 3">
    <location>
        <begin position="391"/>
        <end position="411"/>
    </location>
</feature>
<feature type="transmembrane region" description="Helical" evidence="3">
    <location>
        <begin position="412"/>
        <end position="432"/>
    </location>
</feature>
<feature type="topological domain" description="Cytoplasmic" evidence="2 3">
    <location>
        <begin position="433"/>
        <end position="453"/>
    </location>
</feature>
<feature type="transmembrane region" description="Helical" evidence="3">
    <location>
        <begin position="454"/>
        <end position="474"/>
    </location>
</feature>
<feature type="topological domain" description="Extracellular" evidence="3">
    <location>
        <begin position="475"/>
        <end position="476"/>
    </location>
</feature>
<feature type="transmembrane region" description="Helical" evidence="3">
    <location>
        <begin position="477"/>
        <end position="497"/>
    </location>
</feature>
<feature type="topological domain" description="Cytoplasmic" evidence="2 3">
    <location>
        <begin position="498"/>
        <end position="514"/>
    </location>
</feature>
<feature type="transmembrane region" description="Helical" evidence="3">
    <location>
        <begin position="515"/>
        <end position="535"/>
    </location>
</feature>
<feature type="topological domain" description="Extracellular" evidence="2 3">
    <location>
        <begin position="536"/>
        <end position="547"/>
    </location>
</feature>
<feature type="site" description="Influences on amino acid transport capacity" evidence="1">
    <location>
        <position position="232"/>
    </location>
</feature>
<feature type="modified residue" description="Phosphoserine" evidence="9">
    <location>
        <position position="49"/>
    </location>
</feature>
<feature type="glycosylation site" description="N-linked (GlcNAc...) asparagine" evidence="3">
    <location>
        <position position="260"/>
    </location>
</feature>
<feature type="glycosylation site" description="N-linked (GlcNAc...) asparagine" evidence="3">
    <location>
        <position position="264"/>
    </location>
</feature>
<feature type="glycosylation site" description="N-linked (GlcNAc...) asparagine" evidence="3">
    <location>
        <position position="276"/>
    </location>
</feature>
<feature type="disulfide bond" evidence="1">
    <location>
        <begin position="249"/>
        <end position="321"/>
    </location>
</feature>
<evidence type="ECO:0000250" key="1">
    <source>
        <dbReference type="UniProtKB" id="Q8R1S9"/>
    </source>
</evidence>
<evidence type="ECO:0000250" key="2">
    <source>
        <dbReference type="UniProtKB" id="Q969I6"/>
    </source>
</evidence>
<evidence type="ECO:0000255" key="3"/>
<evidence type="ECO:0000269" key="4">
    <source>
    </source>
</evidence>
<evidence type="ECO:0000303" key="5">
    <source>
    </source>
</evidence>
<evidence type="ECO:0000305" key="6"/>
<evidence type="ECO:0000305" key="7">
    <source>
    </source>
</evidence>
<evidence type="ECO:0000312" key="8">
    <source>
        <dbReference type="EMBL" id="AAH97292.1"/>
    </source>
</evidence>
<evidence type="ECO:0007744" key="9">
    <source>
    </source>
</evidence>
<organism>
    <name type="scientific">Rattus norvegicus</name>
    <name type="common">Rat</name>
    <dbReference type="NCBI Taxonomy" id="10116"/>
    <lineage>
        <taxon>Eukaryota</taxon>
        <taxon>Metazoa</taxon>
        <taxon>Chordata</taxon>
        <taxon>Craniata</taxon>
        <taxon>Vertebrata</taxon>
        <taxon>Euteleostomi</taxon>
        <taxon>Mammalia</taxon>
        <taxon>Eutheria</taxon>
        <taxon>Euarchontoglires</taxon>
        <taxon>Glires</taxon>
        <taxon>Rodentia</taxon>
        <taxon>Myomorpha</taxon>
        <taxon>Muroidea</taxon>
        <taxon>Muridae</taxon>
        <taxon>Murinae</taxon>
        <taxon>Rattus</taxon>
    </lineage>
</organism>
<protein>
    <recommendedName>
        <fullName evidence="6">Sodium-coupled neutral amino acid transporter 4</fullName>
    </recommendedName>
    <alternativeName>
        <fullName>Amino acid transporter A3</fullName>
    </alternativeName>
    <alternativeName>
        <fullName>Na(+)-coupled neutral amino acid transporter 4</fullName>
    </alternativeName>
    <alternativeName>
        <fullName>Solute carrier family 38 member 4</fullName>
    </alternativeName>
    <alternativeName>
        <fullName>System A amino acid transporter 3</fullName>
    </alternativeName>
</protein>
<accession>Q9EQ25</accession>
<proteinExistence type="evidence at protein level"/>